<feature type="chain" id="PRO_0000143951" description="UPF0292 protein MJ1624">
    <location>
        <begin position="1"/>
        <end position="128"/>
    </location>
</feature>
<feature type="domain" description="Toprim" evidence="1">
    <location>
        <begin position="23"/>
        <end position="105"/>
    </location>
</feature>
<feature type="binding site" evidence="1">
    <location>
        <position position="29"/>
    </location>
    <ligand>
        <name>Mg(2+)</name>
        <dbReference type="ChEBI" id="CHEBI:18420"/>
        <label>1</label>
        <note>catalytic</note>
    </ligand>
</feature>
<feature type="binding site" evidence="1">
    <location>
        <position position="74"/>
    </location>
    <ligand>
        <name>Mg(2+)</name>
        <dbReference type="ChEBI" id="CHEBI:18420"/>
        <label>1</label>
        <note>catalytic</note>
    </ligand>
</feature>
<feature type="binding site" evidence="1">
    <location>
        <position position="74"/>
    </location>
    <ligand>
        <name>Mg(2+)</name>
        <dbReference type="ChEBI" id="CHEBI:18420"/>
        <label>2</label>
    </ligand>
</feature>
<feature type="binding site" evidence="1">
    <location>
        <position position="76"/>
    </location>
    <ligand>
        <name>Mg(2+)</name>
        <dbReference type="ChEBI" id="CHEBI:18420"/>
        <label>2</label>
    </ligand>
</feature>
<gene>
    <name type="ordered locus">MJ1624</name>
</gene>
<reference key="1">
    <citation type="journal article" date="1996" name="Science">
        <title>Complete genome sequence of the methanogenic archaeon, Methanococcus jannaschii.</title>
        <authorList>
            <person name="Bult C.J."/>
            <person name="White O."/>
            <person name="Olsen G.J."/>
            <person name="Zhou L."/>
            <person name="Fleischmann R.D."/>
            <person name="Sutton G.G."/>
            <person name="Blake J.A."/>
            <person name="FitzGerald L.M."/>
            <person name="Clayton R.A."/>
            <person name="Gocayne J.D."/>
            <person name="Kerlavage A.R."/>
            <person name="Dougherty B.A."/>
            <person name="Tomb J.-F."/>
            <person name="Adams M.D."/>
            <person name="Reich C.I."/>
            <person name="Overbeek R."/>
            <person name="Kirkness E.F."/>
            <person name="Weinstock K.G."/>
            <person name="Merrick J.M."/>
            <person name="Glodek A."/>
            <person name="Scott J.L."/>
            <person name="Geoghagen N.S.M."/>
            <person name="Weidman J.F."/>
            <person name="Fuhrmann J.L."/>
            <person name="Nguyen D."/>
            <person name="Utterback T.R."/>
            <person name="Kelley J.M."/>
            <person name="Peterson J.D."/>
            <person name="Sadow P.W."/>
            <person name="Hanna M.C."/>
            <person name="Cotton M.D."/>
            <person name="Roberts K.M."/>
            <person name="Hurst M.A."/>
            <person name="Kaine B.P."/>
            <person name="Borodovsky M."/>
            <person name="Klenk H.-P."/>
            <person name="Fraser C.M."/>
            <person name="Smith H.O."/>
            <person name="Woese C.R."/>
            <person name="Venter J.C."/>
        </authorList>
    </citation>
    <scope>NUCLEOTIDE SEQUENCE [LARGE SCALE GENOMIC DNA]</scope>
    <source>
        <strain>ATCC 43067 / DSM 2661 / JAL-1 / JCM 10045 / NBRC 100440</strain>
    </source>
</reference>
<evidence type="ECO:0000255" key="1">
    <source>
        <dbReference type="HAMAP-Rule" id="MF_01095"/>
    </source>
</evidence>
<evidence type="ECO:0000305" key="2"/>
<name>Y1624_METJA</name>
<proteinExistence type="inferred from homology"/>
<dbReference type="EMBL" id="L77117">
    <property type="protein sequence ID" value="AAB99642.1"/>
    <property type="status" value="ALT_INIT"/>
    <property type="molecule type" value="Genomic_DNA"/>
</dbReference>
<dbReference type="PIR" id="F64502">
    <property type="entry name" value="F64502"/>
</dbReference>
<dbReference type="RefSeq" id="WP_064496879.1">
    <property type="nucleotide sequence ID" value="NC_000909.1"/>
</dbReference>
<dbReference type="SMR" id="Q59018"/>
<dbReference type="STRING" id="243232.MJ_1624"/>
<dbReference type="PaxDb" id="243232-MJ_1624"/>
<dbReference type="EnsemblBacteria" id="AAB99642">
    <property type="protein sequence ID" value="AAB99642"/>
    <property type="gene ID" value="MJ_1624"/>
</dbReference>
<dbReference type="GeneID" id="1452533"/>
<dbReference type="KEGG" id="mja:MJ_1624"/>
<dbReference type="eggNOG" id="arCOG01486">
    <property type="taxonomic scope" value="Archaea"/>
</dbReference>
<dbReference type="HOGENOM" id="CLU_140789_0_0_2"/>
<dbReference type="InParanoid" id="Q59018"/>
<dbReference type="OrthoDB" id="56459at2157"/>
<dbReference type="PhylomeDB" id="Q59018"/>
<dbReference type="Proteomes" id="UP000000805">
    <property type="component" value="Chromosome"/>
</dbReference>
<dbReference type="GO" id="GO:0046872">
    <property type="term" value="F:metal ion binding"/>
    <property type="evidence" value="ECO:0007669"/>
    <property type="project" value="UniProtKB-KW"/>
</dbReference>
<dbReference type="CDD" id="cd01027">
    <property type="entry name" value="TOPRIM_RNase_M5_like"/>
    <property type="match status" value="1"/>
</dbReference>
<dbReference type="Gene3D" id="3.40.1360.10">
    <property type="match status" value="1"/>
</dbReference>
<dbReference type="HAMAP" id="MF_01095">
    <property type="entry name" value="UPF0292"/>
    <property type="match status" value="1"/>
</dbReference>
<dbReference type="InterPro" id="IPR006171">
    <property type="entry name" value="TOPRIM_dom"/>
</dbReference>
<dbReference type="InterPro" id="IPR034141">
    <property type="entry name" value="TOPRIM_RNase_M5-like"/>
</dbReference>
<dbReference type="InterPro" id="IPR022972">
    <property type="entry name" value="UPF0292"/>
</dbReference>
<dbReference type="NCBIfam" id="NF003094">
    <property type="entry name" value="PRK04017.1-5"/>
    <property type="match status" value="1"/>
</dbReference>
<dbReference type="PANTHER" id="PTHR39964:SF2">
    <property type="entry name" value="UPF0292 PROTEIN MJ1624"/>
    <property type="match status" value="1"/>
</dbReference>
<dbReference type="PANTHER" id="PTHR39964">
    <property type="entry name" value="UPF0292 PROTEIN TK1411"/>
    <property type="match status" value="1"/>
</dbReference>
<dbReference type="Pfam" id="PF01751">
    <property type="entry name" value="Toprim"/>
    <property type="match status" value="1"/>
</dbReference>
<dbReference type="SMART" id="SM00493">
    <property type="entry name" value="TOPRIM"/>
    <property type="match status" value="1"/>
</dbReference>
<dbReference type="SUPFAM" id="SSF110455">
    <property type="entry name" value="Toprim domain"/>
    <property type="match status" value="1"/>
</dbReference>
<dbReference type="PROSITE" id="PS50880">
    <property type="entry name" value="TOPRIM"/>
    <property type="match status" value="1"/>
</dbReference>
<keyword id="KW-0460">Magnesium</keyword>
<keyword id="KW-0479">Metal-binding</keyword>
<keyword id="KW-1185">Reference proteome</keyword>
<protein>
    <recommendedName>
        <fullName evidence="1">UPF0292 protein MJ1624</fullName>
    </recommendedName>
</protein>
<sequence length="128" mass="15196">MRRDEYFEKLLEVIEELKIEAEEKPIIVEGKRDVESLEKLGVEGTFIIIAKTPIYLIADELVRKRVKEVILLTDFDRRGRMLAKAIIEEFRHRGIKVNTKIRHEIFIYTNSGIRDIESLFSYVNKRLF</sequence>
<accession>Q59018</accession>
<organism>
    <name type="scientific">Methanocaldococcus jannaschii (strain ATCC 43067 / DSM 2661 / JAL-1 / JCM 10045 / NBRC 100440)</name>
    <name type="common">Methanococcus jannaschii</name>
    <dbReference type="NCBI Taxonomy" id="243232"/>
    <lineage>
        <taxon>Archaea</taxon>
        <taxon>Methanobacteriati</taxon>
        <taxon>Methanobacteriota</taxon>
        <taxon>Methanomada group</taxon>
        <taxon>Methanococci</taxon>
        <taxon>Methanococcales</taxon>
        <taxon>Methanocaldococcaceae</taxon>
        <taxon>Methanocaldococcus</taxon>
    </lineage>
</organism>
<comment type="cofactor">
    <cofactor evidence="1">
        <name>Mg(2+)</name>
        <dbReference type="ChEBI" id="CHEBI:18420"/>
    </cofactor>
    <text evidence="1">Binds two Mg(2+) per subunit.</text>
</comment>
<comment type="similarity">
    <text evidence="1">Belongs to the UPF0292 family.</text>
</comment>
<comment type="sequence caution" evidence="2">
    <conflict type="erroneous initiation">
        <sequence resource="EMBL-CDS" id="AAB99642"/>
    </conflict>
</comment>